<organism>
    <name type="scientific">Gallus gallus</name>
    <name type="common">Chicken</name>
    <dbReference type="NCBI Taxonomy" id="9031"/>
    <lineage>
        <taxon>Eukaryota</taxon>
        <taxon>Metazoa</taxon>
        <taxon>Chordata</taxon>
        <taxon>Craniata</taxon>
        <taxon>Vertebrata</taxon>
        <taxon>Euteleostomi</taxon>
        <taxon>Archelosauria</taxon>
        <taxon>Archosauria</taxon>
        <taxon>Dinosauria</taxon>
        <taxon>Saurischia</taxon>
        <taxon>Theropoda</taxon>
        <taxon>Coelurosauria</taxon>
        <taxon>Aves</taxon>
        <taxon>Neognathae</taxon>
        <taxon>Galloanserae</taxon>
        <taxon>Galliformes</taxon>
        <taxon>Phasianidae</taxon>
        <taxon>Phasianinae</taxon>
        <taxon>Gallus</taxon>
    </lineage>
</organism>
<accession>Q8JGM4</accession>
<name>QSOX1_CHICK</name>
<protein>
    <recommendedName>
        <fullName>Sulfhydryl oxidase 1</fullName>
        <ecNumber>1.8.3.2</ecNumber>
    </recommendedName>
    <alternativeName>
        <fullName>Quiescin Q6</fullName>
    </alternativeName>
</protein>
<keyword id="KW-0903">Direct protein sequencing</keyword>
<keyword id="KW-1015">Disulfide bond</keyword>
<keyword id="KW-0274">FAD</keyword>
<keyword id="KW-0285">Flavoprotein</keyword>
<keyword id="KW-0325">Glycoprotein</keyword>
<keyword id="KW-0333">Golgi apparatus</keyword>
<keyword id="KW-0472">Membrane</keyword>
<keyword id="KW-0560">Oxidoreductase</keyword>
<keyword id="KW-1185">Reference proteome</keyword>
<keyword id="KW-0964">Secreted</keyword>
<keyword id="KW-0732">Signal</keyword>
<keyword id="KW-0812">Transmembrane</keyword>
<keyword id="KW-1133">Transmembrane helix</keyword>
<reference key="1">
    <citation type="journal article" date="2002" name="Arch. Biochem. Biophys.">
        <title>Sulfhydryl oxidases: emerging catalysts of protein disulfide bond formation in eukaryotes.</title>
        <authorList>
            <person name="Thorpe C."/>
            <person name="Hoober K.L."/>
            <person name="Raje S."/>
            <person name="Glynn N.M."/>
            <person name="Burnside J."/>
            <person name="Turi G.K."/>
            <person name="Coppock D.L."/>
        </authorList>
    </citation>
    <scope>NUCLEOTIDE SEQUENCE [MRNA]</scope>
    <scope>REVIEW</scope>
</reference>
<reference key="2">
    <citation type="journal article" date="1999" name="J. Biol. Chem.">
        <title>Homology between egg white sulfhydryl oxidase and quiescin Q6 defines a new class of flavin-linked sulfhydryl oxidases.</title>
        <authorList>
            <person name="Hoober K.L."/>
            <person name="Glynn N.M."/>
            <person name="Burnside J."/>
            <person name="Coppock D.L."/>
            <person name="Thorpe C."/>
        </authorList>
    </citation>
    <scope>PARTIAL PROTEIN SEQUENCE</scope>
    <scope>DISULFIDE BONDS</scope>
    <scope>IDENTIFICATION BY MASS SPECTROMETRY</scope>
</reference>
<dbReference type="EC" id="1.8.3.2"/>
<dbReference type="EMBL" id="AY112666">
    <property type="protein sequence ID" value="AAM44079.1"/>
    <property type="molecule type" value="mRNA"/>
</dbReference>
<dbReference type="RefSeq" id="NP_989456.1">
    <property type="nucleotide sequence ID" value="NM_204125.1"/>
</dbReference>
<dbReference type="SMR" id="Q8JGM4"/>
<dbReference type="FunCoup" id="Q8JGM4">
    <property type="interactions" value="269"/>
</dbReference>
<dbReference type="STRING" id="9031.ENSGALP00000065414"/>
<dbReference type="GlyCosmos" id="Q8JGM4">
    <property type="glycosylation" value="5 sites, No reported glycans"/>
</dbReference>
<dbReference type="GlyGen" id="Q8JGM4">
    <property type="glycosylation" value="5 sites"/>
</dbReference>
<dbReference type="PaxDb" id="9031-ENSGALP00000006256"/>
<dbReference type="GeneID" id="373914"/>
<dbReference type="KEGG" id="gga:373914"/>
<dbReference type="CTD" id="5768"/>
<dbReference type="VEuPathDB" id="HostDB:geneid_373914"/>
<dbReference type="eggNOG" id="KOG1731">
    <property type="taxonomic scope" value="Eukaryota"/>
</dbReference>
<dbReference type="HOGENOM" id="CLU_020182_1_0_1"/>
<dbReference type="InParanoid" id="Q8JGM4"/>
<dbReference type="OrthoDB" id="59470at2759"/>
<dbReference type="PhylomeDB" id="Q8JGM4"/>
<dbReference type="BRENDA" id="1.8.3.2">
    <property type="organism ID" value="1306"/>
</dbReference>
<dbReference type="Reactome" id="R-GGA-114608">
    <property type="pathway name" value="Platelet degranulation"/>
</dbReference>
<dbReference type="Reactome" id="R-GGA-381426">
    <property type="pathway name" value="Regulation of Insulin-like Growth Factor (IGF) transport and uptake by Insulin-like Growth Factor Binding Proteins (IGFBPs)"/>
</dbReference>
<dbReference type="Reactome" id="R-GGA-6798695">
    <property type="pathway name" value="Neutrophil degranulation"/>
</dbReference>
<dbReference type="Reactome" id="R-GGA-8957275">
    <property type="pathway name" value="Post-translational protein phosphorylation"/>
</dbReference>
<dbReference type="PRO" id="PR:Q8JGM4"/>
<dbReference type="Proteomes" id="UP000000539">
    <property type="component" value="Chromosome 8"/>
</dbReference>
<dbReference type="Bgee" id="ENSGALG00000003933">
    <property type="expression patterns" value="Expressed in ovary and 14 other cell types or tissues"/>
</dbReference>
<dbReference type="GO" id="GO:0005615">
    <property type="term" value="C:extracellular space"/>
    <property type="evidence" value="ECO:0000250"/>
    <property type="project" value="UniProtKB"/>
</dbReference>
<dbReference type="GO" id="GO:0000139">
    <property type="term" value="C:Golgi membrane"/>
    <property type="evidence" value="ECO:0000250"/>
    <property type="project" value="UniProtKB"/>
</dbReference>
<dbReference type="GO" id="GO:0016971">
    <property type="term" value="F:flavin-dependent sulfhydryl oxidase activity"/>
    <property type="evidence" value="ECO:0000250"/>
    <property type="project" value="UniProtKB"/>
</dbReference>
<dbReference type="GO" id="GO:0003756">
    <property type="term" value="F:protein disulfide isomerase activity"/>
    <property type="evidence" value="ECO:0000250"/>
    <property type="project" value="UniProtKB"/>
</dbReference>
<dbReference type="GO" id="GO:0006457">
    <property type="term" value="P:protein folding"/>
    <property type="evidence" value="ECO:0000318"/>
    <property type="project" value="GO_Central"/>
</dbReference>
<dbReference type="CDD" id="cd02992">
    <property type="entry name" value="PDI_a_QSOX"/>
    <property type="match status" value="1"/>
</dbReference>
<dbReference type="FunFam" id="1.20.120.1960:FF:000001">
    <property type="entry name" value="Sulfhydryl oxidase"/>
    <property type="match status" value="1"/>
</dbReference>
<dbReference type="FunFam" id="1.20.120.310:FF:000001">
    <property type="entry name" value="Sulfhydryl oxidase"/>
    <property type="match status" value="1"/>
</dbReference>
<dbReference type="FunFam" id="3.40.30.10:FF:000073">
    <property type="entry name" value="Sulfhydryl oxidase"/>
    <property type="match status" value="1"/>
</dbReference>
<dbReference type="FunFam" id="3.40.30.10:FF:000080">
    <property type="entry name" value="Sulfhydryl oxidase"/>
    <property type="match status" value="1"/>
</dbReference>
<dbReference type="Gene3D" id="1.20.120.310">
    <property type="entry name" value="ERV/ALR sulfhydryl oxidase domain"/>
    <property type="match status" value="1"/>
</dbReference>
<dbReference type="Gene3D" id="3.40.30.10">
    <property type="entry name" value="Glutaredoxin"/>
    <property type="match status" value="2"/>
</dbReference>
<dbReference type="Gene3D" id="1.20.120.1960">
    <property type="entry name" value="QSOX sulfhydryl oxidase domain"/>
    <property type="match status" value="1"/>
</dbReference>
<dbReference type="InterPro" id="IPR036774">
    <property type="entry name" value="ERV/ALR_sulphydryl_oxid_sf"/>
</dbReference>
<dbReference type="InterPro" id="IPR017905">
    <property type="entry name" value="ERV/ALR_sulphydryl_oxidase"/>
</dbReference>
<dbReference type="InterPro" id="IPR040986">
    <property type="entry name" value="QSOX_FAD-bd_dom"/>
</dbReference>
<dbReference type="InterPro" id="IPR042568">
    <property type="entry name" value="QSOX_FAD-bd_sf"/>
</dbReference>
<dbReference type="InterPro" id="IPR041269">
    <property type="entry name" value="QSOX_Trx1"/>
</dbReference>
<dbReference type="InterPro" id="IPR039798">
    <property type="entry name" value="Sulfhydryl_oxidase"/>
</dbReference>
<dbReference type="InterPro" id="IPR036249">
    <property type="entry name" value="Thioredoxin-like_sf"/>
</dbReference>
<dbReference type="InterPro" id="IPR013766">
    <property type="entry name" value="Thioredoxin_domain"/>
</dbReference>
<dbReference type="PANTHER" id="PTHR22897">
    <property type="entry name" value="QUIESCIN Q6-RELATED SULFHYDRYL OXIDASE"/>
    <property type="match status" value="1"/>
</dbReference>
<dbReference type="PANTHER" id="PTHR22897:SF6">
    <property type="entry name" value="SULFHYDRYL OXIDASE 1"/>
    <property type="match status" value="1"/>
</dbReference>
<dbReference type="Pfam" id="PF04777">
    <property type="entry name" value="Evr1_Alr"/>
    <property type="match status" value="1"/>
</dbReference>
<dbReference type="Pfam" id="PF18371">
    <property type="entry name" value="FAD_SOX"/>
    <property type="match status" value="1"/>
</dbReference>
<dbReference type="Pfam" id="PF18108">
    <property type="entry name" value="QSOX_Trx1"/>
    <property type="match status" value="1"/>
</dbReference>
<dbReference type="Pfam" id="PF00085">
    <property type="entry name" value="Thioredoxin"/>
    <property type="match status" value="1"/>
</dbReference>
<dbReference type="SUPFAM" id="SSF69000">
    <property type="entry name" value="FAD-dependent thiol oxidase"/>
    <property type="match status" value="1"/>
</dbReference>
<dbReference type="SUPFAM" id="SSF52833">
    <property type="entry name" value="Thioredoxin-like"/>
    <property type="match status" value="1"/>
</dbReference>
<dbReference type="PROSITE" id="PS51324">
    <property type="entry name" value="ERV_ALR"/>
    <property type="match status" value="1"/>
</dbReference>
<dbReference type="PROSITE" id="PS51352">
    <property type="entry name" value="THIOREDOXIN_2"/>
    <property type="match status" value="1"/>
</dbReference>
<evidence type="ECO:0000250" key="1"/>
<evidence type="ECO:0000250" key="2">
    <source>
        <dbReference type="UniProtKB" id="O00391"/>
    </source>
</evidence>
<evidence type="ECO:0000255" key="3"/>
<evidence type="ECO:0000255" key="4">
    <source>
        <dbReference type="PROSITE-ProRule" id="PRU00654"/>
    </source>
</evidence>
<evidence type="ECO:0000255" key="5">
    <source>
        <dbReference type="PROSITE-ProRule" id="PRU00691"/>
    </source>
</evidence>
<evidence type="ECO:0000256" key="6">
    <source>
        <dbReference type="SAM" id="MobiDB-lite"/>
    </source>
</evidence>
<evidence type="ECO:0000305" key="7"/>
<proteinExistence type="evidence at protein level"/>
<feature type="signal peptide" evidence="3">
    <location>
        <begin position="1"/>
        <end position="42"/>
    </location>
</feature>
<feature type="chain" id="PRO_0000249537" description="Sulfhydryl oxidase 1">
    <location>
        <begin position="43"/>
        <end position="743"/>
    </location>
</feature>
<feature type="transmembrane region" description="Helical" evidence="3">
    <location>
        <begin position="707"/>
        <end position="727"/>
    </location>
</feature>
<feature type="domain" description="Thioredoxin" evidence="5">
    <location>
        <begin position="43"/>
        <end position="166"/>
    </location>
</feature>
<feature type="domain" description="ERV/ALR sulfhydryl oxidase" evidence="4">
    <location>
        <begin position="410"/>
        <end position="513"/>
    </location>
</feature>
<feature type="region of interest" description="Disordered" evidence="6">
    <location>
        <begin position="567"/>
        <end position="617"/>
    </location>
</feature>
<feature type="compositionally biased region" description="Acidic residues" evidence="6">
    <location>
        <begin position="580"/>
        <end position="593"/>
    </location>
</feature>
<feature type="compositionally biased region" description="Basic and acidic residues" evidence="6">
    <location>
        <begin position="594"/>
        <end position="604"/>
    </location>
</feature>
<feature type="active site" description="Nucleophile" evidence="1">
    <location>
        <position position="80"/>
    </location>
</feature>
<feature type="active site" description="Nucleophile" evidence="1">
    <location>
        <position position="83"/>
    </location>
</feature>
<feature type="binding site" evidence="2">
    <location>
        <position position="415"/>
    </location>
    <ligand>
        <name>FAD</name>
        <dbReference type="ChEBI" id="CHEBI:57692"/>
    </ligand>
</feature>
<feature type="binding site" evidence="2">
    <location>
        <position position="422"/>
    </location>
    <ligand>
        <name>FAD</name>
        <dbReference type="ChEBI" id="CHEBI:57692"/>
    </ligand>
</feature>
<feature type="binding site" evidence="2">
    <location>
        <position position="426"/>
    </location>
    <ligand>
        <name>FAD</name>
        <dbReference type="ChEBI" id="CHEBI:57692"/>
    </ligand>
</feature>
<feature type="binding site" evidence="2">
    <location>
        <position position="461"/>
    </location>
    <ligand>
        <name>FAD</name>
        <dbReference type="ChEBI" id="CHEBI:57692"/>
    </ligand>
</feature>
<feature type="binding site" evidence="2">
    <location>
        <position position="465"/>
    </location>
    <ligand>
        <name>FAD</name>
        <dbReference type="ChEBI" id="CHEBI:57692"/>
    </ligand>
</feature>
<feature type="binding site" evidence="2">
    <location>
        <begin position="488"/>
        <end position="495"/>
    </location>
    <ligand>
        <name>FAD</name>
        <dbReference type="ChEBI" id="CHEBI:57692"/>
    </ligand>
</feature>
<feature type="binding site" evidence="2">
    <location>
        <position position="510"/>
    </location>
    <ligand>
        <name>FAD</name>
        <dbReference type="ChEBI" id="CHEBI:57692"/>
    </ligand>
</feature>
<feature type="binding site" evidence="2">
    <location>
        <position position="513"/>
    </location>
    <ligand>
        <name>FAD</name>
        <dbReference type="ChEBI" id="CHEBI:57692"/>
    </ligand>
</feature>
<feature type="glycosylation site" description="N-linked (GlcNAc...) asparagine" evidence="3">
    <location>
        <position position="254"/>
    </location>
</feature>
<feature type="glycosylation site" description="N-linked (GlcNAc...) asparagine" evidence="3">
    <location>
        <position position="288"/>
    </location>
</feature>
<feature type="glycosylation site" description="N-linked (GlcNAc...) asparagine" evidence="3">
    <location>
        <position position="295"/>
    </location>
</feature>
<feature type="glycosylation site" description="N-linked (GlcNAc...) asparagine" evidence="3">
    <location>
        <position position="371"/>
    </location>
</feature>
<feature type="glycosylation site" description="N-linked (GlcNAc...) asparagine" evidence="3">
    <location>
        <position position="401"/>
    </location>
</feature>
<feature type="disulfide bond" description="Redox-active" evidence="4 5">
    <location>
        <begin position="80"/>
        <end position="83"/>
    </location>
</feature>
<feature type="disulfide bond" evidence="2">
    <location>
        <begin position="111"/>
        <end position="120"/>
    </location>
</feature>
<feature type="disulfide bond" evidence="4">
    <location>
        <begin position="407"/>
        <end position="419"/>
    </location>
</feature>
<feature type="disulfide bond" evidence="4">
    <location>
        <begin position="459"/>
        <end position="462"/>
    </location>
</feature>
<feature type="disulfide bond" evidence="4">
    <location>
        <begin position="519"/>
        <end position="522"/>
    </location>
</feature>
<comment type="function">
    <text evidence="2">Catalyzes the oxidation of sulfhydryl groups in peptide and protein thiols to disulfides with the reduction of oxygen to hydrogen peroxide. Plays a role in disulfide bond formation in a variety of extracellular proteins. In fibroblasts, required for normal incorporation of laminin into the extracellular matrix, and thereby for normal cell-cell adhesion and cell migration.</text>
</comment>
<comment type="catalytic activity">
    <reaction evidence="2">
        <text>2 R'C(R)SH + O2 = R'C(R)S-S(R)CR' + H2O2</text>
        <dbReference type="Rhea" id="RHEA:17357"/>
        <dbReference type="ChEBI" id="CHEBI:15379"/>
        <dbReference type="ChEBI" id="CHEBI:16240"/>
        <dbReference type="ChEBI" id="CHEBI:16520"/>
        <dbReference type="ChEBI" id="CHEBI:17412"/>
        <dbReference type="EC" id="1.8.3.2"/>
    </reaction>
</comment>
<comment type="cofactor">
    <cofactor evidence="2">
        <name>FAD</name>
        <dbReference type="ChEBI" id="CHEBI:57692"/>
    </cofactor>
    <text evidence="2">Binds 1 FAD per subunit.</text>
</comment>
<comment type="subcellular location">
    <subcellularLocation>
        <location evidence="2">Golgi apparatus membrane</location>
        <topology evidence="2">Single-pass membrane protein</topology>
    </subcellularLocation>
    <subcellularLocation>
        <location evidence="2">Secreted</location>
    </subcellularLocation>
    <text evidence="2">A small proportion is secreted, probably via a proteolytic cleavage that removes the membrane anchor.</text>
</comment>
<comment type="PTM">
    <text evidence="2">N-glycosylated. O-glycosylated on Thr and Ser residues.</text>
</comment>
<comment type="similarity">
    <text evidence="7">Belongs to the quiescin-sulfhydryl oxidase (QSOX) family.</text>
</comment>
<sequence length="743" mass="83079">MWRRRARSGGGGGGGGGGAAPRCRWWPAVLALLAAALPAARSRSLYSPSDPLELLGADTAERRLLGSPSAWAVEFFASWCGHCIHFAPTWRALAEDVREWRPAVMIAALDCADEANQQVCADFGITGFPTLKFFRAFSKKAEDGIRIAHPTATVADLRRAIITNLEQSGDAWPPACPPLEPASAEEVRSFFHRNTERYLALIFEQSNSFVGREVALDLLQYENVAVRRVLSSEEELVEKFGVTTFPSAYLLLRNGSFSRLPVHAEARSFYTYYLQTLSGVTRGSYRLNVTGSAINETRALQPAQADRSKVYVADLESTVHYTLRVEAGRPAVLAGAQLAALKCYVATLAKYFPGRPSVQTFLQSLDSWLRNWTEPELPRSALKEAVKNKEDASPAAVLPTNVTWVGCRGSEPHFRGYPCGLWTIFHLLTVQAAQGGPDEELPLEVLNTMRCYVKHFFGCQECAQHFEAMAAKSMDQVKSRREAVLWLWSHHNEVNARLAGGDTEDPQFPKLQWPPPDMCPQCHREERGVHTWDEAAVLSFLKEHFSLGNLYLDHAIPIPMAGEEAAASARLSTAGLREKEEEERKEEEEEGEKETEKPHREGETGRPGSSELRRPSIVRRNPRLRALGEDIVDLDSFSEQHFKSKALRAAGRHRRLSKRDTVALHHDAGWERLQVPESREEEEEGGVLRRSPWLRVLGLGFSRLDVSLCIALYFLSSMCLLGMYTFFRLRTRARKGRPGFPVA</sequence>
<gene>
    <name type="primary">QSOX1</name>
    <name type="synonym">QSCN6</name>
    <name type="synonym">QSOX</name>
    <name type="synonym">SOX</name>
</gene>